<feature type="chain" id="PRO_1000143357" description="ATP synthase subunit alpha">
    <location>
        <begin position="1"/>
        <end position="504"/>
    </location>
</feature>
<feature type="binding site" evidence="1">
    <location>
        <begin position="169"/>
        <end position="176"/>
    </location>
    <ligand>
        <name>ATP</name>
        <dbReference type="ChEBI" id="CHEBI:30616"/>
    </ligand>
</feature>
<feature type="site" description="Required for activity" evidence="1">
    <location>
        <position position="362"/>
    </location>
</feature>
<organism>
    <name type="scientific">Clostridium botulinum (strain Eklund 17B / Type B)</name>
    <dbReference type="NCBI Taxonomy" id="935198"/>
    <lineage>
        <taxon>Bacteria</taxon>
        <taxon>Bacillati</taxon>
        <taxon>Bacillota</taxon>
        <taxon>Clostridia</taxon>
        <taxon>Eubacteriales</taxon>
        <taxon>Clostridiaceae</taxon>
        <taxon>Clostridium</taxon>
    </lineage>
</organism>
<sequence>MNIKPEEITSIIKKEIEKYEKQIKTVDSGTIIQVGDGVSRVYGLDDCMEGELLEFPNDVYGMALNLEQDNVGCVLLGNEEGIKEGDIVKGSGKIVEVPVGEALIGRVVNSLGEELDGKGPINTNQTRPIEVKAPSIIDRSSVNEPLQTGIKAIDSMIPIGKGQRELIIGDRQTGKTALVIDTILNQKGKDVICIYVAIGQKQSTVAHIVNTLTEMGAMDYSIIVSSTAADSAPLQYLAPYAGCSIGEYFMNQGKDVLIVYDDLSKHAVAYRTMSLLLRRPPGREAYPGDVFYIHSRLLERAAKLSKENGGGSLTALPIIETLAGDITAYIPTNVISITDGQIFLESDLFNSGQRPAVNAGISVSRVGGNAQIKAMKQVTGTLRLELAQYRELAAFAQFGSDLDKDSKKRLEKGKRLVEILKQDQYKPLEVEKQVIILYTAVNDFLSDIKVEDIKKFEKELLEYVDTHYRELGRQIAEEKVLTDEIKAKLEVAIVEFKKIFLQEA</sequence>
<proteinExistence type="inferred from homology"/>
<keyword id="KW-0066">ATP synthesis</keyword>
<keyword id="KW-0067">ATP-binding</keyword>
<keyword id="KW-1003">Cell membrane</keyword>
<keyword id="KW-0139">CF(1)</keyword>
<keyword id="KW-0375">Hydrogen ion transport</keyword>
<keyword id="KW-0406">Ion transport</keyword>
<keyword id="KW-0472">Membrane</keyword>
<keyword id="KW-0547">Nucleotide-binding</keyword>
<keyword id="KW-1278">Translocase</keyword>
<keyword id="KW-0813">Transport</keyword>
<accession>B2TJZ8</accession>
<name>ATPA_CLOBB</name>
<gene>
    <name evidence="1" type="primary">atpA</name>
    <name type="ordered locus">CLL_A0496</name>
</gene>
<comment type="function">
    <text evidence="1">Produces ATP from ADP in the presence of a proton gradient across the membrane. The alpha chain is a regulatory subunit.</text>
</comment>
<comment type="catalytic activity">
    <reaction evidence="1">
        <text>ATP + H2O + 4 H(+)(in) = ADP + phosphate + 5 H(+)(out)</text>
        <dbReference type="Rhea" id="RHEA:57720"/>
        <dbReference type="ChEBI" id="CHEBI:15377"/>
        <dbReference type="ChEBI" id="CHEBI:15378"/>
        <dbReference type="ChEBI" id="CHEBI:30616"/>
        <dbReference type="ChEBI" id="CHEBI:43474"/>
        <dbReference type="ChEBI" id="CHEBI:456216"/>
        <dbReference type="EC" id="7.1.2.2"/>
    </reaction>
</comment>
<comment type="subunit">
    <text evidence="1">F-type ATPases have 2 components, CF(1) - the catalytic core - and CF(0) - the membrane proton channel. CF(1) has five subunits: alpha(3), beta(3), gamma(1), delta(1), epsilon(1). CF(0) has three main subunits: a(1), b(2) and c(9-12). The alpha and beta chains form an alternating ring which encloses part of the gamma chain. CF(1) is attached to CF(0) by a central stalk formed by the gamma and epsilon chains, while a peripheral stalk is formed by the delta and b chains.</text>
</comment>
<comment type="subcellular location">
    <subcellularLocation>
        <location evidence="1">Cell membrane</location>
        <topology evidence="1">Peripheral membrane protein</topology>
    </subcellularLocation>
</comment>
<comment type="similarity">
    <text evidence="1">Belongs to the ATPase alpha/beta chains family.</text>
</comment>
<evidence type="ECO:0000255" key="1">
    <source>
        <dbReference type="HAMAP-Rule" id="MF_01346"/>
    </source>
</evidence>
<reference key="1">
    <citation type="submission" date="2008-04" db="EMBL/GenBank/DDBJ databases">
        <title>Complete sequence of Clostridium botulinum strain Eklund.</title>
        <authorList>
            <person name="Brinkac L.M."/>
            <person name="Brown J.L."/>
            <person name="Bruce D."/>
            <person name="Detter C."/>
            <person name="Munk C."/>
            <person name="Smith L.A."/>
            <person name="Smith T.J."/>
            <person name="Sutton G."/>
            <person name="Brettin T.S."/>
        </authorList>
    </citation>
    <scope>NUCLEOTIDE SEQUENCE [LARGE SCALE GENOMIC DNA]</scope>
    <source>
        <strain>Eklund 17B / Type B</strain>
    </source>
</reference>
<dbReference type="EC" id="7.1.2.2" evidence="1"/>
<dbReference type="EMBL" id="CP001056">
    <property type="protein sequence ID" value="ACD23127.1"/>
    <property type="molecule type" value="Genomic_DNA"/>
</dbReference>
<dbReference type="SMR" id="B2TJZ8"/>
<dbReference type="KEGG" id="cbk:CLL_A0496"/>
<dbReference type="PATRIC" id="fig|935198.13.peg.451"/>
<dbReference type="HOGENOM" id="CLU_010091_2_1_9"/>
<dbReference type="Proteomes" id="UP000001195">
    <property type="component" value="Chromosome"/>
</dbReference>
<dbReference type="GO" id="GO:0005886">
    <property type="term" value="C:plasma membrane"/>
    <property type="evidence" value="ECO:0007669"/>
    <property type="project" value="UniProtKB-SubCell"/>
</dbReference>
<dbReference type="GO" id="GO:0045259">
    <property type="term" value="C:proton-transporting ATP synthase complex"/>
    <property type="evidence" value="ECO:0007669"/>
    <property type="project" value="UniProtKB-KW"/>
</dbReference>
<dbReference type="GO" id="GO:0043531">
    <property type="term" value="F:ADP binding"/>
    <property type="evidence" value="ECO:0007669"/>
    <property type="project" value="TreeGrafter"/>
</dbReference>
<dbReference type="GO" id="GO:0005524">
    <property type="term" value="F:ATP binding"/>
    <property type="evidence" value="ECO:0007669"/>
    <property type="project" value="UniProtKB-UniRule"/>
</dbReference>
<dbReference type="GO" id="GO:0046933">
    <property type="term" value="F:proton-transporting ATP synthase activity, rotational mechanism"/>
    <property type="evidence" value="ECO:0007669"/>
    <property type="project" value="UniProtKB-UniRule"/>
</dbReference>
<dbReference type="CDD" id="cd18113">
    <property type="entry name" value="ATP-synt_F1_alpha_C"/>
    <property type="match status" value="1"/>
</dbReference>
<dbReference type="CDD" id="cd18116">
    <property type="entry name" value="ATP-synt_F1_alpha_N"/>
    <property type="match status" value="1"/>
</dbReference>
<dbReference type="CDD" id="cd01132">
    <property type="entry name" value="F1-ATPase_alpha_CD"/>
    <property type="match status" value="1"/>
</dbReference>
<dbReference type="FunFam" id="1.20.150.20:FF:000001">
    <property type="entry name" value="ATP synthase subunit alpha"/>
    <property type="match status" value="1"/>
</dbReference>
<dbReference type="FunFam" id="2.40.30.20:FF:000001">
    <property type="entry name" value="ATP synthase subunit alpha"/>
    <property type="match status" value="1"/>
</dbReference>
<dbReference type="FunFam" id="3.40.50.300:FF:000002">
    <property type="entry name" value="ATP synthase subunit alpha"/>
    <property type="match status" value="1"/>
</dbReference>
<dbReference type="Gene3D" id="2.40.30.20">
    <property type="match status" value="1"/>
</dbReference>
<dbReference type="Gene3D" id="1.20.150.20">
    <property type="entry name" value="ATP synthase alpha/beta chain, C-terminal domain"/>
    <property type="match status" value="1"/>
</dbReference>
<dbReference type="Gene3D" id="3.40.50.300">
    <property type="entry name" value="P-loop containing nucleotide triphosphate hydrolases"/>
    <property type="match status" value="1"/>
</dbReference>
<dbReference type="HAMAP" id="MF_01346">
    <property type="entry name" value="ATP_synth_alpha_bact"/>
    <property type="match status" value="1"/>
</dbReference>
<dbReference type="InterPro" id="IPR023366">
    <property type="entry name" value="ATP_synth_asu-like_sf"/>
</dbReference>
<dbReference type="InterPro" id="IPR000793">
    <property type="entry name" value="ATP_synth_asu_C"/>
</dbReference>
<dbReference type="InterPro" id="IPR038376">
    <property type="entry name" value="ATP_synth_asu_C_sf"/>
</dbReference>
<dbReference type="InterPro" id="IPR033732">
    <property type="entry name" value="ATP_synth_F1_a_nt-bd_dom"/>
</dbReference>
<dbReference type="InterPro" id="IPR005294">
    <property type="entry name" value="ATP_synth_F1_asu"/>
</dbReference>
<dbReference type="InterPro" id="IPR020003">
    <property type="entry name" value="ATPase_a/bsu_AS"/>
</dbReference>
<dbReference type="InterPro" id="IPR004100">
    <property type="entry name" value="ATPase_F1/V1/A1_a/bsu_N"/>
</dbReference>
<dbReference type="InterPro" id="IPR036121">
    <property type="entry name" value="ATPase_F1/V1/A1_a/bsu_N_sf"/>
</dbReference>
<dbReference type="InterPro" id="IPR000194">
    <property type="entry name" value="ATPase_F1/V1/A1_a/bsu_nucl-bd"/>
</dbReference>
<dbReference type="InterPro" id="IPR027417">
    <property type="entry name" value="P-loop_NTPase"/>
</dbReference>
<dbReference type="NCBIfam" id="TIGR00962">
    <property type="entry name" value="atpA"/>
    <property type="match status" value="1"/>
</dbReference>
<dbReference type="NCBIfam" id="NF009884">
    <property type="entry name" value="PRK13343.1"/>
    <property type="match status" value="1"/>
</dbReference>
<dbReference type="PANTHER" id="PTHR48082">
    <property type="entry name" value="ATP SYNTHASE SUBUNIT ALPHA, MITOCHONDRIAL"/>
    <property type="match status" value="1"/>
</dbReference>
<dbReference type="PANTHER" id="PTHR48082:SF2">
    <property type="entry name" value="ATP SYNTHASE SUBUNIT ALPHA, MITOCHONDRIAL"/>
    <property type="match status" value="1"/>
</dbReference>
<dbReference type="Pfam" id="PF00006">
    <property type="entry name" value="ATP-synt_ab"/>
    <property type="match status" value="1"/>
</dbReference>
<dbReference type="Pfam" id="PF00306">
    <property type="entry name" value="ATP-synt_ab_C"/>
    <property type="match status" value="1"/>
</dbReference>
<dbReference type="Pfam" id="PF02874">
    <property type="entry name" value="ATP-synt_ab_N"/>
    <property type="match status" value="1"/>
</dbReference>
<dbReference type="PIRSF" id="PIRSF039088">
    <property type="entry name" value="F_ATPase_subunit_alpha"/>
    <property type="match status" value="1"/>
</dbReference>
<dbReference type="SUPFAM" id="SSF47917">
    <property type="entry name" value="C-terminal domain of alpha and beta subunits of F1 ATP synthase"/>
    <property type="match status" value="1"/>
</dbReference>
<dbReference type="SUPFAM" id="SSF50615">
    <property type="entry name" value="N-terminal domain of alpha and beta subunits of F1 ATP synthase"/>
    <property type="match status" value="1"/>
</dbReference>
<dbReference type="SUPFAM" id="SSF52540">
    <property type="entry name" value="P-loop containing nucleoside triphosphate hydrolases"/>
    <property type="match status" value="1"/>
</dbReference>
<dbReference type="PROSITE" id="PS00152">
    <property type="entry name" value="ATPASE_ALPHA_BETA"/>
    <property type="match status" value="1"/>
</dbReference>
<protein>
    <recommendedName>
        <fullName evidence="1">ATP synthase subunit alpha</fullName>
        <ecNumber evidence="1">7.1.2.2</ecNumber>
    </recommendedName>
    <alternativeName>
        <fullName evidence="1">ATP synthase F1 sector subunit alpha</fullName>
    </alternativeName>
    <alternativeName>
        <fullName evidence="1">F-ATPase subunit alpha</fullName>
    </alternativeName>
</protein>